<evidence type="ECO:0000255" key="1">
    <source>
        <dbReference type="HAMAP-Rule" id="MF_00346"/>
    </source>
</evidence>
<comment type="similarity">
    <text evidence="1">Belongs to the UPF0149 family.</text>
</comment>
<accession>B6EKP3</accession>
<reference key="1">
    <citation type="journal article" date="2008" name="BMC Genomics">
        <title>The genome sequence of the fish pathogen Aliivibrio salmonicida strain LFI1238 shows extensive evidence of gene decay.</title>
        <authorList>
            <person name="Hjerde E."/>
            <person name="Lorentzen M.S."/>
            <person name="Holden M.T."/>
            <person name="Seeger K."/>
            <person name="Paulsen S."/>
            <person name="Bason N."/>
            <person name="Churcher C."/>
            <person name="Harris D."/>
            <person name="Norbertczak H."/>
            <person name="Quail M.A."/>
            <person name="Sanders S."/>
            <person name="Thurston S."/>
            <person name="Parkhill J."/>
            <person name="Willassen N.P."/>
            <person name="Thomson N.R."/>
        </authorList>
    </citation>
    <scope>NUCLEOTIDE SEQUENCE [LARGE SCALE GENOMIC DNA]</scope>
    <source>
        <strain>LFI1238</strain>
    </source>
</reference>
<protein>
    <recommendedName>
        <fullName evidence="1">UPF0149 protein VSAL_I2539</fullName>
    </recommendedName>
</protein>
<proteinExistence type="inferred from homology"/>
<sequence>MSEIKMPEFLTVESALKDSGLAVTPAELHGLLVGMISGGLPLDDNAWKPLMYDYTNDGLGWPDSAIQIGSAVFQFTVAELTGSELALSMLIPNDKEGLMNRADGLSEWVNHFISGLGLVDLKMDKASEALKEALVDLEEIARLGIDEDDDIEEQESLFEQVLEHVHVCVLTIHLELGQRIHKDASKAVH</sequence>
<organism>
    <name type="scientific">Aliivibrio salmonicida (strain LFI1238)</name>
    <name type="common">Vibrio salmonicida (strain LFI1238)</name>
    <dbReference type="NCBI Taxonomy" id="316275"/>
    <lineage>
        <taxon>Bacteria</taxon>
        <taxon>Pseudomonadati</taxon>
        <taxon>Pseudomonadota</taxon>
        <taxon>Gammaproteobacteria</taxon>
        <taxon>Vibrionales</taxon>
        <taxon>Vibrionaceae</taxon>
        <taxon>Aliivibrio</taxon>
    </lineage>
</organism>
<name>Y2539_ALISL</name>
<gene>
    <name type="ordered locus">VSAL_I2539</name>
</gene>
<feature type="chain" id="PRO_1000120465" description="UPF0149 protein VSAL_I2539">
    <location>
        <begin position="1"/>
        <end position="189"/>
    </location>
</feature>
<dbReference type="EMBL" id="FM178379">
    <property type="protein sequence ID" value="CAQ80223.1"/>
    <property type="molecule type" value="Genomic_DNA"/>
</dbReference>
<dbReference type="RefSeq" id="WP_012551011.1">
    <property type="nucleotide sequence ID" value="NC_011312.1"/>
</dbReference>
<dbReference type="SMR" id="B6EKP3"/>
<dbReference type="KEGG" id="vsa:VSAL_I2539"/>
<dbReference type="eggNOG" id="COG3079">
    <property type="taxonomic scope" value="Bacteria"/>
</dbReference>
<dbReference type="HOGENOM" id="CLU_085336_1_0_6"/>
<dbReference type="Proteomes" id="UP000001730">
    <property type="component" value="Chromosome 1"/>
</dbReference>
<dbReference type="GO" id="GO:0005829">
    <property type="term" value="C:cytosol"/>
    <property type="evidence" value="ECO:0007669"/>
    <property type="project" value="TreeGrafter"/>
</dbReference>
<dbReference type="Gene3D" id="1.20.120.740">
    <property type="entry name" value="YgfB uncharacterised protein family UPF0149, PF03695"/>
    <property type="match status" value="1"/>
</dbReference>
<dbReference type="HAMAP" id="MF_00346">
    <property type="entry name" value="UPF0149"/>
    <property type="match status" value="1"/>
</dbReference>
<dbReference type="InterPro" id="IPR011978">
    <property type="entry name" value="YgfB-like"/>
</dbReference>
<dbReference type="InterPro" id="IPR036255">
    <property type="entry name" value="YgfB-like_sf"/>
</dbReference>
<dbReference type="NCBIfam" id="NF002477">
    <property type="entry name" value="PRK01736.1"/>
    <property type="match status" value="1"/>
</dbReference>
<dbReference type="PANTHER" id="PTHR37528">
    <property type="entry name" value="UPF0149 PROTEIN YGFB"/>
    <property type="match status" value="1"/>
</dbReference>
<dbReference type="PANTHER" id="PTHR37528:SF1">
    <property type="entry name" value="UPF0149 PROTEIN YGFB"/>
    <property type="match status" value="1"/>
</dbReference>
<dbReference type="Pfam" id="PF03695">
    <property type="entry name" value="UPF0149"/>
    <property type="match status" value="1"/>
</dbReference>
<dbReference type="SUPFAM" id="SSF101327">
    <property type="entry name" value="YgfB-like"/>
    <property type="match status" value="1"/>
</dbReference>